<sequence length="335" mass="36377">MHTAYIPVPTPVRPPSAERWPLAAVAELFELPFLDLLHRAQQVHRQHFDANTVQLSSLLSIKTGGCPEDCAYCPQSAHYDTGVDADKLMPLDEVVRAARAAQANGAQRFCMGAAWRSPKPHHLEAVAEMIGAVKALGMETCVTLGMLRDGQAEQLKAAGLDYYNHNLDTAPEFYGKIISTRTYQDRLDTLQQVREAGINVCCGGIVGMGESRRDRAGLVAQLANMEPYPESVPINNLVQVEGTPLAGAETLDPFEFIRTIAVARITMPLAKVRLSAGRETMSDSEQALCFMAGANSIFYGDVLLTTGNPQVEADRRLLQRLGMRAEGLPCAAGQA</sequence>
<name>BIOB_BORBR</name>
<accession>Q7WMQ3</accession>
<proteinExistence type="inferred from homology"/>
<reference key="1">
    <citation type="journal article" date="2003" name="Nat. Genet.">
        <title>Comparative analysis of the genome sequences of Bordetella pertussis, Bordetella parapertussis and Bordetella bronchiseptica.</title>
        <authorList>
            <person name="Parkhill J."/>
            <person name="Sebaihia M."/>
            <person name="Preston A."/>
            <person name="Murphy L.D."/>
            <person name="Thomson N.R."/>
            <person name="Harris D.E."/>
            <person name="Holden M.T.G."/>
            <person name="Churcher C.M."/>
            <person name="Bentley S.D."/>
            <person name="Mungall K.L."/>
            <person name="Cerdeno-Tarraga A.-M."/>
            <person name="Temple L."/>
            <person name="James K.D."/>
            <person name="Harris B."/>
            <person name="Quail M.A."/>
            <person name="Achtman M."/>
            <person name="Atkin R."/>
            <person name="Baker S."/>
            <person name="Basham D."/>
            <person name="Bason N."/>
            <person name="Cherevach I."/>
            <person name="Chillingworth T."/>
            <person name="Collins M."/>
            <person name="Cronin A."/>
            <person name="Davis P."/>
            <person name="Doggett J."/>
            <person name="Feltwell T."/>
            <person name="Goble A."/>
            <person name="Hamlin N."/>
            <person name="Hauser H."/>
            <person name="Holroyd S."/>
            <person name="Jagels K."/>
            <person name="Leather S."/>
            <person name="Moule S."/>
            <person name="Norberczak H."/>
            <person name="O'Neil S."/>
            <person name="Ormond D."/>
            <person name="Price C."/>
            <person name="Rabbinowitsch E."/>
            <person name="Rutter S."/>
            <person name="Sanders M."/>
            <person name="Saunders D."/>
            <person name="Seeger K."/>
            <person name="Sharp S."/>
            <person name="Simmonds M."/>
            <person name="Skelton J."/>
            <person name="Squares R."/>
            <person name="Squares S."/>
            <person name="Stevens K."/>
            <person name="Unwin L."/>
            <person name="Whitehead S."/>
            <person name="Barrell B.G."/>
            <person name="Maskell D.J."/>
        </authorList>
    </citation>
    <scope>NUCLEOTIDE SEQUENCE [LARGE SCALE GENOMIC DNA]</scope>
    <source>
        <strain>ATCC BAA-588 / NCTC 13252 / RB50</strain>
    </source>
</reference>
<comment type="function">
    <text evidence="1">Catalyzes the conversion of dethiobiotin (DTB) to biotin by the insertion of a sulfur atom into dethiobiotin via a radical-based mechanism.</text>
</comment>
<comment type="catalytic activity">
    <reaction evidence="1">
        <text>(4R,5S)-dethiobiotin + (sulfur carrier)-SH + 2 reduced [2Fe-2S]-[ferredoxin] + 2 S-adenosyl-L-methionine = (sulfur carrier)-H + biotin + 2 5'-deoxyadenosine + 2 L-methionine + 2 oxidized [2Fe-2S]-[ferredoxin]</text>
        <dbReference type="Rhea" id="RHEA:22060"/>
        <dbReference type="Rhea" id="RHEA-COMP:10000"/>
        <dbReference type="Rhea" id="RHEA-COMP:10001"/>
        <dbReference type="Rhea" id="RHEA-COMP:14737"/>
        <dbReference type="Rhea" id="RHEA-COMP:14739"/>
        <dbReference type="ChEBI" id="CHEBI:17319"/>
        <dbReference type="ChEBI" id="CHEBI:29917"/>
        <dbReference type="ChEBI" id="CHEBI:33737"/>
        <dbReference type="ChEBI" id="CHEBI:33738"/>
        <dbReference type="ChEBI" id="CHEBI:57586"/>
        <dbReference type="ChEBI" id="CHEBI:57844"/>
        <dbReference type="ChEBI" id="CHEBI:59789"/>
        <dbReference type="ChEBI" id="CHEBI:64428"/>
        <dbReference type="ChEBI" id="CHEBI:149473"/>
        <dbReference type="EC" id="2.8.1.6"/>
    </reaction>
</comment>
<comment type="cofactor">
    <cofactor evidence="1">
        <name>[4Fe-4S] cluster</name>
        <dbReference type="ChEBI" id="CHEBI:49883"/>
    </cofactor>
    <text evidence="1">Binds 1 [4Fe-4S] cluster. The cluster is coordinated with 3 cysteines and an exchangeable S-adenosyl-L-methionine.</text>
</comment>
<comment type="cofactor">
    <cofactor evidence="1">
        <name>[2Fe-2S] cluster</name>
        <dbReference type="ChEBI" id="CHEBI:190135"/>
    </cofactor>
    <text evidence="1">Binds 1 [2Fe-2S] cluster. The cluster is coordinated with 3 cysteines and 1 arginine.</text>
</comment>
<comment type="pathway">
    <text evidence="1">Cofactor biosynthesis; biotin biosynthesis; biotin from 7,8-diaminononanoate: step 2/2.</text>
</comment>
<comment type="subunit">
    <text evidence="1">Homodimer.</text>
</comment>
<comment type="similarity">
    <text evidence="1">Belongs to the radical SAM superfamily. Biotin synthase family.</text>
</comment>
<keyword id="KW-0001">2Fe-2S</keyword>
<keyword id="KW-0004">4Fe-4S</keyword>
<keyword id="KW-0093">Biotin biosynthesis</keyword>
<keyword id="KW-0408">Iron</keyword>
<keyword id="KW-0411">Iron-sulfur</keyword>
<keyword id="KW-0479">Metal-binding</keyword>
<keyword id="KW-0949">S-adenosyl-L-methionine</keyword>
<keyword id="KW-0808">Transferase</keyword>
<organism>
    <name type="scientific">Bordetella bronchiseptica (strain ATCC BAA-588 / NCTC 13252 / RB50)</name>
    <name type="common">Alcaligenes bronchisepticus</name>
    <dbReference type="NCBI Taxonomy" id="257310"/>
    <lineage>
        <taxon>Bacteria</taxon>
        <taxon>Pseudomonadati</taxon>
        <taxon>Pseudomonadota</taxon>
        <taxon>Betaproteobacteria</taxon>
        <taxon>Burkholderiales</taxon>
        <taxon>Alcaligenaceae</taxon>
        <taxon>Bordetella</taxon>
    </lineage>
</organism>
<protein>
    <recommendedName>
        <fullName evidence="1">Biotin synthase</fullName>
        <ecNumber evidence="1">2.8.1.6</ecNumber>
    </recommendedName>
</protein>
<dbReference type="EC" id="2.8.1.6" evidence="1"/>
<dbReference type="EMBL" id="BX640441">
    <property type="protein sequence ID" value="CAE31835.1"/>
    <property type="molecule type" value="Genomic_DNA"/>
</dbReference>
<dbReference type="RefSeq" id="WP_010926132.1">
    <property type="nucleotide sequence ID" value="NC_002927.3"/>
</dbReference>
<dbReference type="SMR" id="Q7WMQ3"/>
<dbReference type="GeneID" id="93202870"/>
<dbReference type="KEGG" id="bbr:BB1337"/>
<dbReference type="eggNOG" id="COG0502">
    <property type="taxonomic scope" value="Bacteria"/>
</dbReference>
<dbReference type="HOGENOM" id="CLU_033172_1_2_4"/>
<dbReference type="UniPathway" id="UPA00078">
    <property type="reaction ID" value="UER00162"/>
</dbReference>
<dbReference type="Proteomes" id="UP000001027">
    <property type="component" value="Chromosome"/>
</dbReference>
<dbReference type="GO" id="GO:0051537">
    <property type="term" value="F:2 iron, 2 sulfur cluster binding"/>
    <property type="evidence" value="ECO:0007669"/>
    <property type="project" value="UniProtKB-KW"/>
</dbReference>
<dbReference type="GO" id="GO:0051539">
    <property type="term" value="F:4 iron, 4 sulfur cluster binding"/>
    <property type="evidence" value="ECO:0007669"/>
    <property type="project" value="UniProtKB-KW"/>
</dbReference>
<dbReference type="GO" id="GO:0004076">
    <property type="term" value="F:biotin synthase activity"/>
    <property type="evidence" value="ECO:0007669"/>
    <property type="project" value="UniProtKB-UniRule"/>
</dbReference>
<dbReference type="GO" id="GO:0005506">
    <property type="term" value="F:iron ion binding"/>
    <property type="evidence" value="ECO:0007669"/>
    <property type="project" value="UniProtKB-UniRule"/>
</dbReference>
<dbReference type="GO" id="GO:0009102">
    <property type="term" value="P:biotin biosynthetic process"/>
    <property type="evidence" value="ECO:0007669"/>
    <property type="project" value="UniProtKB-UniRule"/>
</dbReference>
<dbReference type="CDD" id="cd01335">
    <property type="entry name" value="Radical_SAM"/>
    <property type="match status" value="1"/>
</dbReference>
<dbReference type="FunFam" id="3.20.20.70:FF:000011">
    <property type="entry name" value="Biotin synthase"/>
    <property type="match status" value="1"/>
</dbReference>
<dbReference type="Gene3D" id="3.20.20.70">
    <property type="entry name" value="Aldolase class I"/>
    <property type="match status" value="1"/>
</dbReference>
<dbReference type="HAMAP" id="MF_01694">
    <property type="entry name" value="BioB"/>
    <property type="match status" value="1"/>
</dbReference>
<dbReference type="InterPro" id="IPR013785">
    <property type="entry name" value="Aldolase_TIM"/>
</dbReference>
<dbReference type="InterPro" id="IPR010722">
    <property type="entry name" value="BATS_dom"/>
</dbReference>
<dbReference type="InterPro" id="IPR002684">
    <property type="entry name" value="Biotin_synth/BioAB"/>
</dbReference>
<dbReference type="InterPro" id="IPR024177">
    <property type="entry name" value="Biotin_synthase"/>
</dbReference>
<dbReference type="InterPro" id="IPR006638">
    <property type="entry name" value="Elp3/MiaA/NifB-like_rSAM"/>
</dbReference>
<dbReference type="InterPro" id="IPR007197">
    <property type="entry name" value="rSAM"/>
</dbReference>
<dbReference type="NCBIfam" id="TIGR00433">
    <property type="entry name" value="bioB"/>
    <property type="match status" value="1"/>
</dbReference>
<dbReference type="PANTHER" id="PTHR22976">
    <property type="entry name" value="BIOTIN SYNTHASE"/>
    <property type="match status" value="1"/>
</dbReference>
<dbReference type="PANTHER" id="PTHR22976:SF2">
    <property type="entry name" value="BIOTIN SYNTHASE, MITOCHONDRIAL"/>
    <property type="match status" value="1"/>
</dbReference>
<dbReference type="Pfam" id="PF06968">
    <property type="entry name" value="BATS"/>
    <property type="match status" value="1"/>
</dbReference>
<dbReference type="Pfam" id="PF04055">
    <property type="entry name" value="Radical_SAM"/>
    <property type="match status" value="1"/>
</dbReference>
<dbReference type="PIRSF" id="PIRSF001619">
    <property type="entry name" value="Biotin_synth"/>
    <property type="match status" value="1"/>
</dbReference>
<dbReference type="SFLD" id="SFLDF00272">
    <property type="entry name" value="biotin_synthase"/>
    <property type="match status" value="1"/>
</dbReference>
<dbReference type="SFLD" id="SFLDS00029">
    <property type="entry name" value="Radical_SAM"/>
    <property type="match status" value="1"/>
</dbReference>
<dbReference type="SMART" id="SM00876">
    <property type="entry name" value="BATS"/>
    <property type="match status" value="1"/>
</dbReference>
<dbReference type="SMART" id="SM00729">
    <property type="entry name" value="Elp3"/>
    <property type="match status" value="1"/>
</dbReference>
<dbReference type="SUPFAM" id="SSF102114">
    <property type="entry name" value="Radical SAM enzymes"/>
    <property type="match status" value="1"/>
</dbReference>
<dbReference type="PROSITE" id="PS51918">
    <property type="entry name" value="RADICAL_SAM"/>
    <property type="match status" value="1"/>
</dbReference>
<gene>
    <name evidence="1" type="primary">bioB</name>
    <name type="ordered locus">BB1337</name>
</gene>
<feature type="chain" id="PRO_0000381239" description="Biotin synthase">
    <location>
        <begin position="1"/>
        <end position="335"/>
    </location>
</feature>
<feature type="domain" description="Radical SAM core" evidence="2">
    <location>
        <begin position="51"/>
        <end position="278"/>
    </location>
</feature>
<feature type="binding site" evidence="1">
    <location>
        <position position="66"/>
    </location>
    <ligand>
        <name>[4Fe-4S] cluster</name>
        <dbReference type="ChEBI" id="CHEBI:49883"/>
        <note>4Fe-4S-S-AdoMet</note>
    </ligand>
</feature>
<feature type="binding site" evidence="1">
    <location>
        <position position="70"/>
    </location>
    <ligand>
        <name>[4Fe-4S] cluster</name>
        <dbReference type="ChEBI" id="CHEBI:49883"/>
        <note>4Fe-4S-S-AdoMet</note>
    </ligand>
</feature>
<feature type="binding site" evidence="1">
    <location>
        <position position="73"/>
    </location>
    <ligand>
        <name>[4Fe-4S] cluster</name>
        <dbReference type="ChEBI" id="CHEBI:49883"/>
        <note>4Fe-4S-S-AdoMet</note>
    </ligand>
</feature>
<feature type="binding site" evidence="1">
    <location>
        <position position="110"/>
    </location>
    <ligand>
        <name>[2Fe-2S] cluster</name>
        <dbReference type="ChEBI" id="CHEBI:190135"/>
    </ligand>
</feature>
<feature type="binding site" evidence="1">
    <location>
        <position position="141"/>
    </location>
    <ligand>
        <name>[2Fe-2S] cluster</name>
        <dbReference type="ChEBI" id="CHEBI:190135"/>
    </ligand>
</feature>
<feature type="binding site" evidence="1">
    <location>
        <position position="201"/>
    </location>
    <ligand>
        <name>[2Fe-2S] cluster</name>
        <dbReference type="ChEBI" id="CHEBI:190135"/>
    </ligand>
</feature>
<feature type="binding site" evidence="1">
    <location>
        <position position="273"/>
    </location>
    <ligand>
        <name>[2Fe-2S] cluster</name>
        <dbReference type="ChEBI" id="CHEBI:190135"/>
    </ligand>
</feature>
<evidence type="ECO:0000255" key="1">
    <source>
        <dbReference type="HAMAP-Rule" id="MF_01694"/>
    </source>
</evidence>
<evidence type="ECO:0000255" key="2">
    <source>
        <dbReference type="PROSITE-ProRule" id="PRU01266"/>
    </source>
</evidence>